<sequence>MTAQDFVVKDIGLAAYGRKELDIAETEMPGLMACRKEFSSSQPLRGARISGSLHMTIQTAVLIETLKAIGADIRWSSSNIFSTQDHAAAAIAATGIPVFAVKGETLEEYWTYIDAIFQWPDGHPSNMILDDGADATNYILVGSRAEQNKDILSHPKTEEEEIFFKQIQKRMDATPGFFTRQRAAIKGVSEETTTGVNRLYQLQKEGLLPFPAINVNDSVTKSKFDNKYGCKESLVDGIRRGTDVMIAGKTAIVCGYGDVGKGSAASLSGAGARVKVTEIDPICALQAAMDGYEVVNLDDAASSADIIITTTGNKDVVRLDHMRQVKDMCILGNIGHFDNEIQVAALRNLPWTNIKPQVDMITFPDGKRIILLSEGRLLNLGNATGHPSFVMSASFTNQVLAQIELFTRAEHYTNEVTVLPKNLDEKVARLHLDRLGIKLTVLSEEQAAYIGVTPQGPYKPNHYRY</sequence>
<comment type="function">
    <text evidence="1">May play a key role in the regulation of the intracellular concentration of adenosylhomocysteine.</text>
</comment>
<comment type="catalytic activity">
    <reaction evidence="1">
        <text>S-adenosyl-L-homocysteine + H2O = L-homocysteine + adenosine</text>
        <dbReference type="Rhea" id="RHEA:21708"/>
        <dbReference type="ChEBI" id="CHEBI:15377"/>
        <dbReference type="ChEBI" id="CHEBI:16335"/>
        <dbReference type="ChEBI" id="CHEBI:57856"/>
        <dbReference type="ChEBI" id="CHEBI:58199"/>
        <dbReference type="EC" id="3.13.2.1"/>
    </reaction>
</comment>
<comment type="cofactor">
    <cofactor evidence="1">
        <name>NAD(+)</name>
        <dbReference type="ChEBI" id="CHEBI:57540"/>
    </cofactor>
    <text evidence="1">Binds 1 NAD(+) per subunit.</text>
</comment>
<comment type="pathway">
    <text evidence="1">Amino-acid biosynthesis; L-homocysteine biosynthesis; L-homocysteine from S-adenosyl-L-homocysteine: step 1/1.</text>
</comment>
<comment type="subcellular location">
    <subcellularLocation>
        <location evidence="1">Cytoplasm</location>
    </subcellularLocation>
</comment>
<comment type="similarity">
    <text evidence="1">Belongs to the adenosylhomocysteinase family.</text>
</comment>
<accession>A9IL83</accession>
<reference key="1">
    <citation type="journal article" date="2007" name="Nat. Genet.">
        <title>Genomic analysis of Bartonella identifies type IV secretion systems as host adaptability factors.</title>
        <authorList>
            <person name="Saenz H.L."/>
            <person name="Engel P."/>
            <person name="Stoeckli M.C."/>
            <person name="Lanz C."/>
            <person name="Raddatz G."/>
            <person name="Vayssier-Taussat M."/>
            <person name="Birtles R."/>
            <person name="Schuster S.C."/>
            <person name="Dehio C."/>
        </authorList>
    </citation>
    <scope>NUCLEOTIDE SEQUENCE [LARGE SCALE GENOMIC DNA]</scope>
    <source>
        <strain>CIP 105476 / IBS 506</strain>
    </source>
</reference>
<evidence type="ECO:0000255" key="1">
    <source>
        <dbReference type="HAMAP-Rule" id="MF_00563"/>
    </source>
</evidence>
<keyword id="KW-0963">Cytoplasm</keyword>
<keyword id="KW-0378">Hydrolase</keyword>
<keyword id="KW-0520">NAD</keyword>
<keyword id="KW-0554">One-carbon metabolism</keyword>
<protein>
    <recommendedName>
        <fullName evidence="1">Adenosylhomocysteinase</fullName>
        <ecNumber evidence="1">3.13.2.1</ecNumber>
    </recommendedName>
    <alternativeName>
        <fullName evidence="1">S-adenosyl-L-homocysteine hydrolase</fullName>
        <shortName evidence="1">AdoHcyase</shortName>
    </alternativeName>
</protein>
<organism>
    <name type="scientific">Bartonella tribocorum (strain CIP 105476 / IBS 506)</name>
    <dbReference type="NCBI Taxonomy" id="382640"/>
    <lineage>
        <taxon>Bacteria</taxon>
        <taxon>Pseudomonadati</taxon>
        <taxon>Pseudomonadota</taxon>
        <taxon>Alphaproteobacteria</taxon>
        <taxon>Hyphomicrobiales</taxon>
        <taxon>Bartonellaceae</taxon>
        <taxon>Bartonella</taxon>
    </lineage>
</organism>
<feature type="chain" id="PRO_1000082275" description="Adenosylhomocysteinase">
    <location>
        <begin position="1"/>
        <end position="465"/>
    </location>
</feature>
<feature type="binding site" evidence="1">
    <location>
        <position position="56"/>
    </location>
    <ligand>
        <name>substrate</name>
    </ligand>
</feature>
<feature type="binding site" evidence="1">
    <location>
        <position position="131"/>
    </location>
    <ligand>
        <name>substrate</name>
    </ligand>
</feature>
<feature type="binding site" evidence="1">
    <location>
        <position position="191"/>
    </location>
    <ligand>
        <name>substrate</name>
    </ligand>
</feature>
<feature type="binding site" evidence="1">
    <location>
        <begin position="192"/>
        <end position="194"/>
    </location>
    <ligand>
        <name>NAD(+)</name>
        <dbReference type="ChEBI" id="CHEBI:57540"/>
    </ligand>
</feature>
<feature type="binding site" evidence="1">
    <location>
        <position position="221"/>
    </location>
    <ligand>
        <name>substrate</name>
    </ligand>
</feature>
<feature type="binding site" evidence="1">
    <location>
        <position position="225"/>
    </location>
    <ligand>
        <name>substrate</name>
    </ligand>
</feature>
<feature type="binding site" evidence="1">
    <location>
        <position position="226"/>
    </location>
    <ligand>
        <name>NAD(+)</name>
        <dbReference type="ChEBI" id="CHEBI:57540"/>
    </ligand>
</feature>
<feature type="binding site" evidence="1">
    <location>
        <begin position="255"/>
        <end position="260"/>
    </location>
    <ligand>
        <name>NAD(+)</name>
        <dbReference type="ChEBI" id="CHEBI:57540"/>
    </ligand>
</feature>
<feature type="binding site" evidence="1">
    <location>
        <position position="278"/>
    </location>
    <ligand>
        <name>NAD(+)</name>
        <dbReference type="ChEBI" id="CHEBI:57540"/>
    </ligand>
</feature>
<feature type="binding site" evidence="1">
    <location>
        <position position="313"/>
    </location>
    <ligand>
        <name>NAD(+)</name>
        <dbReference type="ChEBI" id="CHEBI:57540"/>
    </ligand>
</feature>
<feature type="binding site" evidence="1">
    <location>
        <begin position="334"/>
        <end position="336"/>
    </location>
    <ligand>
        <name>NAD(+)</name>
        <dbReference type="ChEBI" id="CHEBI:57540"/>
    </ligand>
</feature>
<feature type="binding site" evidence="1">
    <location>
        <position position="379"/>
    </location>
    <ligand>
        <name>NAD(+)</name>
        <dbReference type="ChEBI" id="CHEBI:57540"/>
    </ligand>
</feature>
<dbReference type="EC" id="3.13.2.1" evidence="1"/>
<dbReference type="EMBL" id="AM260525">
    <property type="protein sequence ID" value="CAK00536.1"/>
    <property type="molecule type" value="Genomic_DNA"/>
</dbReference>
<dbReference type="RefSeq" id="WP_012230315.1">
    <property type="nucleotide sequence ID" value="NC_010161.1"/>
</dbReference>
<dbReference type="SMR" id="A9IL83"/>
<dbReference type="KEGG" id="btr:BT_0032"/>
<dbReference type="eggNOG" id="COG0499">
    <property type="taxonomic scope" value="Bacteria"/>
</dbReference>
<dbReference type="HOGENOM" id="CLU_025194_2_1_5"/>
<dbReference type="UniPathway" id="UPA00314">
    <property type="reaction ID" value="UER00076"/>
</dbReference>
<dbReference type="Proteomes" id="UP000001592">
    <property type="component" value="Chromosome"/>
</dbReference>
<dbReference type="GO" id="GO:0005829">
    <property type="term" value="C:cytosol"/>
    <property type="evidence" value="ECO:0007669"/>
    <property type="project" value="TreeGrafter"/>
</dbReference>
<dbReference type="GO" id="GO:0004013">
    <property type="term" value="F:adenosylhomocysteinase activity"/>
    <property type="evidence" value="ECO:0007669"/>
    <property type="project" value="UniProtKB-UniRule"/>
</dbReference>
<dbReference type="GO" id="GO:0071269">
    <property type="term" value="P:L-homocysteine biosynthetic process"/>
    <property type="evidence" value="ECO:0007669"/>
    <property type="project" value="UniProtKB-UniRule"/>
</dbReference>
<dbReference type="GO" id="GO:0006730">
    <property type="term" value="P:one-carbon metabolic process"/>
    <property type="evidence" value="ECO:0007669"/>
    <property type="project" value="UniProtKB-KW"/>
</dbReference>
<dbReference type="GO" id="GO:0033353">
    <property type="term" value="P:S-adenosylmethionine cycle"/>
    <property type="evidence" value="ECO:0007669"/>
    <property type="project" value="TreeGrafter"/>
</dbReference>
<dbReference type="CDD" id="cd00401">
    <property type="entry name" value="SAHH"/>
    <property type="match status" value="1"/>
</dbReference>
<dbReference type="FunFam" id="3.40.50.720:FF:000004">
    <property type="entry name" value="Adenosylhomocysteinase"/>
    <property type="match status" value="1"/>
</dbReference>
<dbReference type="Gene3D" id="3.40.50.1480">
    <property type="entry name" value="Adenosylhomocysteinase-like"/>
    <property type="match status" value="1"/>
</dbReference>
<dbReference type="Gene3D" id="3.40.50.720">
    <property type="entry name" value="NAD(P)-binding Rossmann-like Domain"/>
    <property type="match status" value="1"/>
</dbReference>
<dbReference type="HAMAP" id="MF_00563">
    <property type="entry name" value="AdoHcyase"/>
    <property type="match status" value="1"/>
</dbReference>
<dbReference type="InterPro" id="IPR042172">
    <property type="entry name" value="Adenosylhomocyst_ase-like_sf"/>
</dbReference>
<dbReference type="InterPro" id="IPR000043">
    <property type="entry name" value="Adenosylhomocysteinase-like"/>
</dbReference>
<dbReference type="InterPro" id="IPR015878">
    <property type="entry name" value="Ado_hCys_hydrolase_NAD-bd"/>
</dbReference>
<dbReference type="InterPro" id="IPR036291">
    <property type="entry name" value="NAD(P)-bd_dom_sf"/>
</dbReference>
<dbReference type="InterPro" id="IPR020082">
    <property type="entry name" value="S-Ado-L-homoCys_hydrolase_CS"/>
</dbReference>
<dbReference type="NCBIfam" id="TIGR00936">
    <property type="entry name" value="ahcY"/>
    <property type="match status" value="1"/>
</dbReference>
<dbReference type="NCBIfam" id="NF004005">
    <property type="entry name" value="PRK05476.2-3"/>
    <property type="match status" value="1"/>
</dbReference>
<dbReference type="PANTHER" id="PTHR23420">
    <property type="entry name" value="ADENOSYLHOMOCYSTEINASE"/>
    <property type="match status" value="1"/>
</dbReference>
<dbReference type="PANTHER" id="PTHR23420:SF0">
    <property type="entry name" value="ADENOSYLHOMOCYSTEINASE"/>
    <property type="match status" value="1"/>
</dbReference>
<dbReference type="Pfam" id="PF05221">
    <property type="entry name" value="AdoHcyase"/>
    <property type="match status" value="1"/>
</dbReference>
<dbReference type="Pfam" id="PF00670">
    <property type="entry name" value="AdoHcyase_NAD"/>
    <property type="match status" value="1"/>
</dbReference>
<dbReference type="PIRSF" id="PIRSF001109">
    <property type="entry name" value="Ad_hcy_hydrolase"/>
    <property type="match status" value="1"/>
</dbReference>
<dbReference type="SMART" id="SM00996">
    <property type="entry name" value="AdoHcyase"/>
    <property type="match status" value="1"/>
</dbReference>
<dbReference type="SMART" id="SM00997">
    <property type="entry name" value="AdoHcyase_NAD"/>
    <property type="match status" value="1"/>
</dbReference>
<dbReference type="SUPFAM" id="SSF52283">
    <property type="entry name" value="Formate/glycerate dehydrogenase catalytic domain-like"/>
    <property type="match status" value="1"/>
</dbReference>
<dbReference type="SUPFAM" id="SSF51735">
    <property type="entry name" value="NAD(P)-binding Rossmann-fold domains"/>
    <property type="match status" value="1"/>
</dbReference>
<dbReference type="PROSITE" id="PS00738">
    <property type="entry name" value="ADOHCYASE_1"/>
    <property type="match status" value="1"/>
</dbReference>
<dbReference type="PROSITE" id="PS00739">
    <property type="entry name" value="ADOHCYASE_2"/>
    <property type="match status" value="1"/>
</dbReference>
<name>SAHH_BART1</name>
<proteinExistence type="inferred from homology"/>
<gene>
    <name evidence="1" type="primary">ahcY</name>
    <name type="ordered locus">BT_0032</name>
</gene>